<protein>
    <recommendedName>
        <fullName evidence="1">Leucyl/phenylalanyl-tRNA--protein transferase</fullName>
        <ecNumber evidence="1">2.3.2.6</ecNumber>
    </recommendedName>
    <alternativeName>
        <fullName evidence="1">L/F-transferase</fullName>
    </alternativeName>
    <alternativeName>
        <fullName evidence="1">Leucyltransferase</fullName>
    </alternativeName>
    <alternativeName>
        <fullName evidence="1">Phenyalanyltransferase</fullName>
    </alternativeName>
</protein>
<reference key="1">
    <citation type="submission" date="2006-12" db="EMBL/GenBank/DDBJ databases">
        <title>Complete sequence of Shewanella sp. W3-18-1.</title>
        <authorList>
            <consortium name="US DOE Joint Genome Institute"/>
            <person name="Copeland A."/>
            <person name="Lucas S."/>
            <person name="Lapidus A."/>
            <person name="Barry K."/>
            <person name="Detter J.C."/>
            <person name="Glavina del Rio T."/>
            <person name="Hammon N."/>
            <person name="Israni S."/>
            <person name="Dalin E."/>
            <person name="Tice H."/>
            <person name="Pitluck S."/>
            <person name="Chain P."/>
            <person name="Malfatti S."/>
            <person name="Shin M."/>
            <person name="Vergez L."/>
            <person name="Schmutz J."/>
            <person name="Larimer F."/>
            <person name="Land M."/>
            <person name="Hauser L."/>
            <person name="Kyrpides N."/>
            <person name="Lykidis A."/>
            <person name="Tiedje J."/>
            <person name="Richardson P."/>
        </authorList>
    </citation>
    <scope>NUCLEOTIDE SEQUENCE [LARGE SCALE GENOMIC DNA]</scope>
    <source>
        <strain>W3-18-1</strain>
    </source>
</reference>
<sequence>MKSLSFLNHEFEAFPSPELALTDPNGLLAIGGDLRPERLLTAYYNGIFPWFNADDPILWWSPDPRAIFMLGKIRISTSLCKYLKKQPWHFTINHAFTSVMAGCAEPRPKQNGTWITDEIQMAYRELHQNGHAHSIEVWEGEQLIGGLYGLAIGQVFCGESMFHRQTNASKAAIVVLQQHLIKRGFKLIDAQVMNPHLESLGAKAIKRTHFIELLTQFRDKKVHPDAWIPSEVFLEL</sequence>
<accession>A1RIX6</accession>
<gene>
    <name evidence="1" type="primary">aat</name>
    <name type="ordered locus">Sputw3181_1785</name>
</gene>
<feature type="chain" id="PRO_0000304362" description="Leucyl/phenylalanyl-tRNA--protein transferase">
    <location>
        <begin position="1"/>
        <end position="236"/>
    </location>
</feature>
<proteinExistence type="inferred from homology"/>
<keyword id="KW-0012">Acyltransferase</keyword>
<keyword id="KW-0963">Cytoplasm</keyword>
<keyword id="KW-0808">Transferase</keyword>
<organism>
    <name type="scientific">Shewanella sp. (strain W3-18-1)</name>
    <dbReference type="NCBI Taxonomy" id="351745"/>
    <lineage>
        <taxon>Bacteria</taxon>
        <taxon>Pseudomonadati</taxon>
        <taxon>Pseudomonadota</taxon>
        <taxon>Gammaproteobacteria</taxon>
        <taxon>Alteromonadales</taxon>
        <taxon>Shewanellaceae</taxon>
        <taxon>Shewanella</taxon>
    </lineage>
</organism>
<comment type="function">
    <text evidence="1">Functions in the N-end rule pathway of protein degradation where it conjugates Leu, Phe and, less efficiently, Met from aminoacyl-tRNAs to the N-termini of proteins containing an N-terminal arginine or lysine.</text>
</comment>
<comment type="catalytic activity">
    <reaction evidence="1">
        <text>N-terminal L-lysyl-[protein] + L-leucyl-tRNA(Leu) = N-terminal L-leucyl-L-lysyl-[protein] + tRNA(Leu) + H(+)</text>
        <dbReference type="Rhea" id="RHEA:12340"/>
        <dbReference type="Rhea" id="RHEA-COMP:9613"/>
        <dbReference type="Rhea" id="RHEA-COMP:9622"/>
        <dbReference type="Rhea" id="RHEA-COMP:12670"/>
        <dbReference type="Rhea" id="RHEA-COMP:12671"/>
        <dbReference type="ChEBI" id="CHEBI:15378"/>
        <dbReference type="ChEBI" id="CHEBI:65249"/>
        <dbReference type="ChEBI" id="CHEBI:78442"/>
        <dbReference type="ChEBI" id="CHEBI:78494"/>
        <dbReference type="ChEBI" id="CHEBI:133043"/>
        <dbReference type="EC" id="2.3.2.6"/>
    </reaction>
</comment>
<comment type="catalytic activity">
    <reaction evidence="1">
        <text>N-terminal L-arginyl-[protein] + L-leucyl-tRNA(Leu) = N-terminal L-leucyl-L-arginyl-[protein] + tRNA(Leu) + H(+)</text>
        <dbReference type="Rhea" id="RHEA:50416"/>
        <dbReference type="Rhea" id="RHEA-COMP:9613"/>
        <dbReference type="Rhea" id="RHEA-COMP:9622"/>
        <dbReference type="Rhea" id="RHEA-COMP:12672"/>
        <dbReference type="Rhea" id="RHEA-COMP:12673"/>
        <dbReference type="ChEBI" id="CHEBI:15378"/>
        <dbReference type="ChEBI" id="CHEBI:64719"/>
        <dbReference type="ChEBI" id="CHEBI:78442"/>
        <dbReference type="ChEBI" id="CHEBI:78494"/>
        <dbReference type="ChEBI" id="CHEBI:133044"/>
        <dbReference type="EC" id="2.3.2.6"/>
    </reaction>
</comment>
<comment type="catalytic activity">
    <reaction evidence="1">
        <text>L-phenylalanyl-tRNA(Phe) + an N-terminal L-alpha-aminoacyl-[protein] = an N-terminal L-phenylalanyl-L-alpha-aminoacyl-[protein] + tRNA(Phe)</text>
        <dbReference type="Rhea" id="RHEA:43632"/>
        <dbReference type="Rhea" id="RHEA-COMP:9668"/>
        <dbReference type="Rhea" id="RHEA-COMP:9699"/>
        <dbReference type="Rhea" id="RHEA-COMP:10636"/>
        <dbReference type="Rhea" id="RHEA-COMP:10637"/>
        <dbReference type="ChEBI" id="CHEBI:78442"/>
        <dbReference type="ChEBI" id="CHEBI:78531"/>
        <dbReference type="ChEBI" id="CHEBI:78597"/>
        <dbReference type="ChEBI" id="CHEBI:83561"/>
        <dbReference type="EC" id="2.3.2.6"/>
    </reaction>
</comment>
<comment type="subcellular location">
    <subcellularLocation>
        <location evidence="1">Cytoplasm</location>
    </subcellularLocation>
</comment>
<comment type="similarity">
    <text evidence="1">Belongs to the L/F-transferase family.</text>
</comment>
<dbReference type="EC" id="2.3.2.6" evidence="1"/>
<dbReference type="EMBL" id="CP000503">
    <property type="protein sequence ID" value="ABM24621.1"/>
    <property type="molecule type" value="Genomic_DNA"/>
</dbReference>
<dbReference type="RefSeq" id="WP_011789117.1">
    <property type="nucleotide sequence ID" value="NC_008750.1"/>
</dbReference>
<dbReference type="SMR" id="A1RIX6"/>
<dbReference type="KEGG" id="shw:Sputw3181_1785"/>
<dbReference type="HOGENOM" id="CLU_075045_0_0_6"/>
<dbReference type="Proteomes" id="UP000002597">
    <property type="component" value="Chromosome"/>
</dbReference>
<dbReference type="GO" id="GO:0005737">
    <property type="term" value="C:cytoplasm"/>
    <property type="evidence" value="ECO:0007669"/>
    <property type="project" value="UniProtKB-SubCell"/>
</dbReference>
<dbReference type="GO" id="GO:0008914">
    <property type="term" value="F:leucyl-tRNA--protein transferase activity"/>
    <property type="evidence" value="ECO:0007669"/>
    <property type="project" value="UniProtKB-UniRule"/>
</dbReference>
<dbReference type="GO" id="GO:0030163">
    <property type="term" value="P:protein catabolic process"/>
    <property type="evidence" value="ECO:0007669"/>
    <property type="project" value="UniProtKB-UniRule"/>
</dbReference>
<dbReference type="FunFam" id="3.30.70.3550:FF:000001">
    <property type="entry name" value="Leucyl/phenylalanyl-tRNA--protein transferase"/>
    <property type="match status" value="1"/>
</dbReference>
<dbReference type="FunFam" id="3.40.630.70:FF:000001">
    <property type="entry name" value="Leucyl/phenylalanyl-tRNA--protein transferase"/>
    <property type="match status" value="1"/>
</dbReference>
<dbReference type="Gene3D" id="3.40.630.70">
    <property type="entry name" value="Leucyl/phenylalanyl-tRNA-protein transferase, C-terminal domain"/>
    <property type="match status" value="1"/>
</dbReference>
<dbReference type="Gene3D" id="3.30.70.3550">
    <property type="entry name" value="Leucyl/phenylalanyl-tRNA-protein transferase, N-terminal domain"/>
    <property type="match status" value="1"/>
</dbReference>
<dbReference type="HAMAP" id="MF_00688">
    <property type="entry name" value="Leu_Phe_trans"/>
    <property type="match status" value="1"/>
</dbReference>
<dbReference type="InterPro" id="IPR016181">
    <property type="entry name" value="Acyl_CoA_acyltransferase"/>
</dbReference>
<dbReference type="InterPro" id="IPR004616">
    <property type="entry name" value="Leu/Phe-tRNA_Trfase"/>
</dbReference>
<dbReference type="InterPro" id="IPR042203">
    <property type="entry name" value="Leu/Phe-tRNA_Trfase_C"/>
</dbReference>
<dbReference type="InterPro" id="IPR042221">
    <property type="entry name" value="Leu/Phe-tRNA_Trfase_N"/>
</dbReference>
<dbReference type="NCBIfam" id="TIGR00667">
    <property type="entry name" value="aat"/>
    <property type="match status" value="1"/>
</dbReference>
<dbReference type="PANTHER" id="PTHR30098">
    <property type="entry name" value="LEUCYL/PHENYLALANYL-TRNA--PROTEIN TRANSFERASE"/>
    <property type="match status" value="1"/>
</dbReference>
<dbReference type="PANTHER" id="PTHR30098:SF2">
    <property type="entry name" value="LEUCYL_PHENYLALANYL-TRNA--PROTEIN TRANSFERASE"/>
    <property type="match status" value="1"/>
</dbReference>
<dbReference type="Pfam" id="PF03588">
    <property type="entry name" value="Leu_Phe_trans"/>
    <property type="match status" value="1"/>
</dbReference>
<dbReference type="SUPFAM" id="SSF55729">
    <property type="entry name" value="Acyl-CoA N-acyltransferases (Nat)"/>
    <property type="match status" value="1"/>
</dbReference>
<name>LFTR_SHESW</name>
<evidence type="ECO:0000255" key="1">
    <source>
        <dbReference type="HAMAP-Rule" id="MF_00688"/>
    </source>
</evidence>